<comment type="function">
    <text evidence="1">Catalyzes the conversion of D-ribulose 5-phosphate to formate and 3,4-dihydroxy-2-butanone 4-phosphate.</text>
</comment>
<comment type="catalytic activity">
    <reaction evidence="1">
        <text>D-ribulose 5-phosphate = (2S)-2-hydroxy-3-oxobutyl phosphate + formate + H(+)</text>
        <dbReference type="Rhea" id="RHEA:18457"/>
        <dbReference type="ChEBI" id="CHEBI:15378"/>
        <dbReference type="ChEBI" id="CHEBI:15740"/>
        <dbReference type="ChEBI" id="CHEBI:58121"/>
        <dbReference type="ChEBI" id="CHEBI:58830"/>
        <dbReference type="EC" id="4.1.99.12"/>
    </reaction>
</comment>
<comment type="cofactor">
    <cofactor evidence="1">
        <name>Mg(2+)</name>
        <dbReference type="ChEBI" id="CHEBI:18420"/>
    </cofactor>
    <cofactor evidence="1">
        <name>Mn(2+)</name>
        <dbReference type="ChEBI" id="CHEBI:29035"/>
    </cofactor>
    <text evidence="1">Binds 2 divalent metal cations per subunit. Magnesium or manganese.</text>
</comment>
<comment type="pathway">
    <text evidence="1">Cofactor biosynthesis; riboflavin biosynthesis; 2-hydroxy-3-oxobutyl phosphate from D-ribulose 5-phosphate: step 1/1.</text>
</comment>
<comment type="subunit">
    <text evidence="1">Homodimer.</text>
</comment>
<comment type="similarity">
    <text evidence="1">Belongs to the DHBP synthase family.</text>
</comment>
<evidence type="ECO:0000255" key="1">
    <source>
        <dbReference type="HAMAP-Rule" id="MF_00180"/>
    </source>
</evidence>
<protein>
    <recommendedName>
        <fullName evidence="1">3,4-dihydroxy-2-butanone 4-phosphate synthase</fullName>
        <shortName evidence="1">DHBP synthase</shortName>
        <ecNumber evidence="1">4.1.99.12</ecNumber>
    </recommendedName>
</protein>
<accession>A8A4J8</accession>
<feature type="chain" id="PRO_1000058379" description="3,4-dihydroxy-2-butanone 4-phosphate synthase">
    <location>
        <begin position="1"/>
        <end position="217"/>
    </location>
</feature>
<feature type="binding site" evidence="1">
    <location>
        <begin position="37"/>
        <end position="38"/>
    </location>
    <ligand>
        <name>D-ribulose 5-phosphate</name>
        <dbReference type="ChEBI" id="CHEBI:58121"/>
    </ligand>
</feature>
<feature type="binding site" evidence="1">
    <location>
        <position position="38"/>
    </location>
    <ligand>
        <name>Mg(2+)</name>
        <dbReference type="ChEBI" id="CHEBI:18420"/>
        <label>1</label>
    </ligand>
</feature>
<feature type="binding site" evidence="1">
    <location>
        <position position="38"/>
    </location>
    <ligand>
        <name>Mg(2+)</name>
        <dbReference type="ChEBI" id="CHEBI:18420"/>
        <label>2</label>
    </ligand>
</feature>
<feature type="binding site" evidence="1">
    <location>
        <position position="42"/>
    </location>
    <ligand>
        <name>D-ribulose 5-phosphate</name>
        <dbReference type="ChEBI" id="CHEBI:58121"/>
    </ligand>
</feature>
<feature type="binding site" evidence="1">
    <location>
        <begin position="150"/>
        <end position="154"/>
    </location>
    <ligand>
        <name>D-ribulose 5-phosphate</name>
        <dbReference type="ChEBI" id="CHEBI:58121"/>
    </ligand>
</feature>
<feature type="binding site" evidence="1">
    <location>
        <position position="153"/>
    </location>
    <ligand>
        <name>Mg(2+)</name>
        <dbReference type="ChEBI" id="CHEBI:18420"/>
        <label>2</label>
    </ligand>
</feature>
<feature type="binding site" evidence="1">
    <location>
        <position position="174"/>
    </location>
    <ligand>
        <name>D-ribulose 5-phosphate</name>
        <dbReference type="ChEBI" id="CHEBI:58121"/>
    </ligand>
</feature>
<feature type="site" description="Essential for catalytic activity" evidence="1">
    <location>
        <position position="136"/>
    </location>
</feature>
<feature type="site" description="Essential for catalytic activity" evidence="1">
    <location>
        <position position="174"/>
    </location>
</feature>
<keyword id="KW-0456">Lyase</keyword>
<keyword id="KW-0460">Magnesium</keyword>
<keyword id="KW-0464">Manganese</keyword>
<keyword id="KW-0479">Metal-binding</keyword>
<keyword id="KW-0686">Riboflavin biosynthesis</keyword>
<proteinExistence type="inferred from homology"/>
<dbReference type="EC" id="4.1.99.12" evidence="1"/>
<dbReference type="EMBL" id="CP000802">
    <property type="protein sequence ID" value="ABV07452.1"/>
    <property type="molecule type" value="Genomic_DNA"/>
</dbReference>
<dbReference type="RefSeq" id="WP_001076997.1">
    <property type="nucleotide sequence ID" value="NC_009800.1"/>
</dbReference>
<dbReference type="SMR" id="A8A4J8"/>
<dbReference type="GeneID" id="93778953"/>
<dbReference type="KEGG" id="ecx:EcHS_A3219"/>
<dbReference type="HOGENOM" id="CLU_020273_3_0_6"/>
<dbReference type="UniPathway" id="UPA00275">
    <property type="reaction ID" value="UER00399"/>
</dbReference>
<dbReference type="GO" id="GO:0005829">
    <property type="term" value="C:cytosol"/>
    <property type="evidence" value="ECO:0007669"/>
    <property type="project" value="TreeGrafter"/>
</dbReference>
<dbReference type="GO" id="GO:0008686">
    <property type="term" value="F:3,4-dihydroxy-2-butanone-4-phosphate synthase activity"/>
    <property type="evidence" value="ECO:0007669"/>
    <property type="project" value="UniProtKB-UniRule"/>
</dbReference>
<dbReference type="GO" id="GO:0000287">
    <property type="term" value="F:magnesium ion binding"/>
    <property type="evidence" value="ECO:0007669"/>
    <property type="project" value="UniProtKB-UniRule"/>
</dbReference>
<dbReference type="GO" id="GO:0030145">
    <property type="term" value="F:manganese ion binding"/>
    <property type="evidence" value="ECO:0007669"/>
    <property type="project" value="UniProtKB-UniRule"/>
</dbReference>
<dbReference type="GO" id="GO:0009231">
    <property type="term" value="P:riboflavin biosynthetic process"/>
    <property type="evidence" value="ECO:0007669"/>
    <property type="project" value="UniProtKB-UniRule"/>
</dbReference>
<dbReference type="FunFam" id="3.90.870.10:FF:000002">
    <property type="entry name" value="3,4-dihydroxy-2-butanone 4-phosphate synthase"/>
    <property type="match status" value="1"/>
</dbReference>
<dbReference type="Gene3D" id="3.90.870.10">
    <property type="entry name" value="DHBP synthase"/>
    <property type="match status" value="1"/>
</dbReference>
<dbReference type="HAMAP" id="MF_00180">
    <property type="entry name" value="RibB"/>
    <property type="match status" value="1"/>
</dbReference>
<dbReference type="InterPro" id="IPR017945">
    <property type="entry name" value="DHBP_synth_RibB-like_a/b_dom"/>
</dbReference>
<dbReference type="InterPro" id="IPR000422">
    <property type="entry name" value="DHBP_synthase_RibB"/>
</dbReference>
<dbReference type="NCBIfam" id="TIGR00506">
    <property type="entry name" value="ribB"/>
    <property type="match status" value="1"/>
</dbReference>
<dbReference type="PANTHER" id="PTHR21327:SF38">
    <property type="entry name" value="3,4-DIHYDROXY-2-BUTANONE 4-PHOSPHATE SYNTHASE"/>
    <property type="match status" value="1"/>
</dbReference>
<dbReference type="PANTHER" id="PTHR21327">
    <property type="entry name" value="GTP CYCLOHYDROLASE II-RELATED"/>
    <property type="match status" value="1"/>
</dbReference>
<dbReference type="Pfam" id="PF00926">
    <property type="entry name" value="DHBP_synthase"/>
    <property type="match status" value="1"/>
</dbReference>
<dbReference type="SUPFAM" id="SSF55821">
    <property type="entry name" value="YrdC/RibB"/>
    <property type="match status" value="1"/>
</dbReference>
<organism>
    <name type="scientific">Escherichia coli O9:H4 (strain HS)</name>
    <dbReference type="NCBI Taxonomy" id="331112"/>
    <lineage>
        <taxon>Bacteria</taxon>
        <taxon>Pseudomonadati</taxon>
        <taxon>Pseudomonadota</taxon>
        <taxon>Gammaproteobacteria</taxon>
        <taxon>Enterobacterales</taxon>
        <taxon>Enterobacteriaceae</taxon>
        <taxon>Escherichia</taxon>
    </lineage>
</organism>
<reference key="1">
    <citation type="journal article" date="2008" name="J. Bacteriol.">
        <title>The pangenome structure of Escherichia coli: comparative genomic analysis of E. coli commensal and pathogenic isolates.</title>
        <authorList>
            <person name="Rasko D.A."/>
            <person name="Rosovitz M.J."/>
            <person name="Myers G.S.A."/>
            <person name="Mongodin E.F."/>
            <person name="Fricke W.F."/>
            <person name="Gajer P."/>
            <person name="Crabtree J."/>
            <person name="Sebaihia M."/>
            <person name="Thomson N.R."/>
            <person name="Chaudhuri R."/>
            <person name="Henderson I.R."/>
            <person name="Sperandio V."/>
            <person name="Ravel J."/>
        </authorList>
    </citation>
    <scope>NUCLEOTIDE SEQUENCE [LARGE SCALE GENOMIC DNA]</scope>
    <source>
        <strain>HS</strain>
    </source>
</reference>
<name>RIBB_ECOHS</name>
<sequence length="217" mass="23353">MNQTLLSSFGTPFERVENALAALREGRGVMVLDDEDRENEGDMIFPAETMTVEQMALTIRHGSGIVCLCITEDRRKQLDLPMMVENNTSAYGTGFTVTIEAAEGVTTGVSAADRITTVRAAIADGAKPSDLNRPGHVFPLRAQAGGVLTRGGHTEATIDLMTLAGFKPAGVLCELTNDDGTMARAPECIEFANKHNMALVTIEDLVAYRQAHERKAS</sequence>
<gene>
    <name evidence="1" type="primary">ribB</name>
    <name type="ordered locus">EcHS_A3219</name>
</gene>